<dbReference type="EC" id="1.1.1.27" evidence="1"/>
<dbReference type="EMBL" id="AE017194">
    <property type="protein sequence ID" value="AAS40931.1"/>
    <property type="molecule type" value="Genomic_DNA"/>
</dbReference>
<dbReference type="SMR" id="P62047"/>
<dbReference type="KEGG" id="bca:BCE_2007"/>
<dbReference type="HOGENOM" id="CLU_045401_1_1_9"/>
<dbReference type="UniPathway" id="UPA00554">
    <property type="reaction ID" value="UER00611"/>
</dbReference>
<dbReference type="Proteomes" id="UP000002527">
    <property type="component" value="Chromosome"/>
</dbReference>
<dbReference type="GO" id="GO:0005737">
    <property type="term" value="C:cytoplasm"/>
    <property type="evidence" value="ECO:0007669"/>
    <property type="project" value="UniProtKB-SubCell"/>
</dbReference>
<dbReference type="GO" id="GO:0004459">
    <property type="term" value="F:L-lactate dehydrogenase activity"/>
    <property type="evidence" value="ECO:0007669"/>
    <property type="project" value="UniProtKB-UniRule"/>
</dbReference>
<dbReference type="GO" id="GO:0006096">
    <property type="term" value="P:glycolytic process"/>
    <property type="evidence" value="ECO:0007669"/>
    <property type="project" value="UniProtKB-UniRule"/>
</dbReference>
<dbReference type="GO" id="GO:0006089">
    <property type="term" value="P:lactate metabolic process"/>
    <property type="evidence" value="ECO:0007669"/>
    <property type="project" value="TreeGrafter"/>
</dbReference>
<dbReference type="CDD" id="cd05291">
    <property type="entry name" value="HicDH_like"/>
    <property type="match status" value="1"/>
</dbReference>
<dbReference type="FunFam" id="3.90.110.10:FF:000005">
    <property type="entry name" value="L-lactate dehydrogenase"/>
    <property type="match status" value="1"/>
</dbReference>
<dbReference type="FunFam" id="3.40.50.720:FF:000018">
    <property type="entry name" value="Malate dehydrogenase"/>
    <property type="match status" value="1"/>
</dbReference>
<dbReference type="Gene3D" id="3.90.110.10">
    <property type="entry name" value="Lactate dehydrogenase/glycoside hydrolase, family 4, C-terminal"/>
    <property type="match status" value="1"/>
</dbReference>
<dbReference type="Gene3D" id="3.40.50.720">
    <property type="entry name" value="NAD(P)-binding Rossmann-like Domain"/>
    <property type="match status" value="1"/>
</dbReference>
<dbReference type="HAMAP" id="MF_00488">
    <property type="entry name" value="Lactate_dehydrog"/>
    <property type="match status" value="1"/>
</dbReference>
<dbReference type="InterPro" id="IPR001557">
    <property type="entry name" value="L-lactate/malate_DH"/>
</dbReference>
<dbReference type="InterPro" id="IPR011304">
    <property type="entry name" value="L-lactate_DH"/>
</dbReference>
<dbReference type="InterPro" id="IPR018177">
    <property type="entry name" value="L-lactate_DH_AS"/>
</dbReference>
<dbReference type="InterPro" id="IPR022383">
    <property type="entry name" value="Lactate/malate_DH_C"/>
</dbReference>
<dbReference type="InterPro" id="IPR001236">
    <property type="entry name" value="Lactate/malate_DH_N"/>
</dbReference>
<dbReference type="InterPro" id="IPR015955">
    <property type="entry name" value="Lactate_DH/Glyco_Ohase_4_C"/>
</dbReference>
<dbReference type="InterPro" id="IPR036291">
    <property type="entry name" value="NAD(P)-bd_dom_sf"/>
</dbReference>
<dbReference type="NCBIfam" id="TIGR01771">
    <property type="entry name" value="L-LDH-NAD"/>
    <property type="match status" value="1"/>
</dbReference>
<dbReference type="NCBIfam" id="NF000824">
    <property type="entry name" value="PRK00066.1"/>
    <property type="match status" value="1"/>
</dbReference>
<dbReference type="NCBIfam" id="NF004863">
    <property type="entry name" value="PRK06223.1"/>
    <property type="match status" value="1"/>
</dbReference>
<dbReference type="PANTHER" id="PTHR43128">
    <property type="entry name" value="L-2-HYDROXYCARBOXYLATE DEHYDROGENASE (NAD(P)(+))"/>
    <property type="match status" value="1"/>
</dbReference>
<dbReference type="PANTHER" id="PTHR43128:SF16">
    <property type="entry name" value="L-LACTATE DEHYDROGENASE"/>
    <property type="match status" value="1"/>
</dbReference>
<dbReference type="Pfam" id="PF02866">
    <property type="entry name" value="Ldh_1_C"/>
    <property type="match status" value="1"/>
</dbReference>
<dbReference type="Pfam" id="PF00056">
    <property type="entry name" value="Ldh_1_N"/>
    <property type="match status" value="1"/>
</dbReference>
<dbReference type="PIRSF" id="PIRSF000102">
    <property type="entry name" value="Lac_mal_DH"/>
    <property type="match status" value="1"/>
</dbReference>
<dbReference type="PRINTS" id="PR00086">
    <property type="entry name" value="LLDHDRGNASE"/>
</dbReference>
<dbReference type="SUPFAM" id="SSF56327">
    <property type="entry name" value="LDH C-terminal domain-like"/>
    <property type="match status" value="1"/>
</dbReference>
<dbReference type="SUPFAM" id="SSF51735">
    <property type="entry name" value="NAD(P)-binding Rossmann-fold domains"/>
    <property type="match status" value="1"/>
</dbReference>
<dbReference type="PROSITE" id="PS00064">
    <property type="entry name" value="L_LDH"/>
    <property type="match status" value="1"/>
</dbReference>
<proteinExistence type="inferred from homology"/>
<name>LDH1_BACC1</name>
<sequence>MKKGINRVVLVGTGAVGCSYAYCMINQAVAEEFVLVDVNEAKAEGEAMDLSHAVPFAPAPTRVWKGSYEDCKDADLVVITAGLPQKPGETRLDLVEKNAKIFKQIVRSIMDSGFDGIFLIATNPVDILTYVTWKESGLPKERVIGSGTTLDSARFRYMLGEYFNIGPHNIHAYIIGEHGDTELPVWSHVSVGIQKLQTLLEKDNTYNQEDLDKIFINVRDAAYHIIERKGATYYGIGMSLLRVTKAILNDENSVLTVSAYLEGQYGQKDVYIGVPAVLNRGGVREILEVELSEDEELKFDHSVQVLKETMAPVL</sequence>
<evidence type="ECO:0000255" key="1">
    <source>
        <dbReference type="HAMAP-Rule" id="MF_00488"/>
    </source>
</evidence>
<gene>
    <name evidence="1" type="primary">ldh1</name>
    <name type="ordered locus">BCE_2007</name>
</gene>
<reference key="1">
    <citation type="journal article" date="2004" name="Nucleic Acids Res.">
        <title>The genome sequence of Bacillus cereus ATCC 10987 reveals metabolic adaptations and a large plasmid related to Bacillus anthracis pXO1.</title>
        <authorList>
            <person name="Rasko D.A."/>
            <person name="Ravel J."/>
            <person name="Oekstad O.A."/>
            <person name="Helgason E."/>
            <person name="Cer R.Z."/>
            <person name="Jiang L."/>
            <person name="Shores K.A."/>
            <person name="Fouts D.E."/>
            <person name="Tourasse N.J."/>
            <person name="Angiuoli S.V."/>
            <person name="Kolonay J.F."/>
            <person name="Nelson W.C."/>
            <person name="Kolstoe A.-B."/>
            <person name="Fraser C.M."/>
            <person name="Read T.D."/>
        </authorList>
    </citation>
    <scope>NUCLEOTIDE SEQUENCE [LARGE SCALE GENOMIC DNA]</scope>
    <source>
        <strain>ATCC 10987 / NRS 248</strain>
    </source>
</reference>
<keyword id="KW-0021">Allosteric enzyme</keyword>
<keyword id="KW-0963">Cytoplasm</keyword>
<keyword id="KW-0520">NAD</keyword>
<keyword id="KW-0560">Oxidoreductase</keyword>
<keyword id="KW-0597">Phosphoprotein</keyword>
<accession>P62047</accession>
<comment type="function">
    <text evidence="1">Catalyzes the conversion of lactate to pyruvate.</text>
</comment>
<comment type="catalytic activity">
    <reaction evidence="1">
        <text>(S)-lactate + NAD(+) = pyruvate + NADH + H(+)</text>
        <dbReference type="Rhea" id="RHEA:23444"/>
        <dbReference type="ChEBI" id="CHEBI:15361"/>
        <dbReference type="ChEBI" id="CHEBI:15378"/>
        <dbReference type="ChEBI" id="CHEBI:16651"/>
        <dbReference type="ChEBI" id="CHEBI:57540"/>
        <dbReference type="ChEBI" id="CHEBI:57945"/>
        <dbReference type="EC" id="1.1.1.27"/>
    </reaction>
</comment>
<comment type="activity regulation">
    <text evidence="1">Allosterically activated by fructose 1,6-bisphosphate (FBP).</text>
</comment>
<comment type="pathway">
    <text evidence="1">Fermentation; pyruvate fermentation to lactate; (S)-lactate from pyruvate: step 1/1.</text>
</comment>
<comment type="subunit">
    <text evidence="1">Homotetramer.</text>
</comment>
<comment type="subcellular location">
    <subcellularLocation>
        <location evidence="1">Cytoplasm</location>
    </subcellularLocation>
</comment>
<comment type="similarity">
    <text evidence="1">Belongs to the LDH/MDH superfamily. LDH family.</text>
</comment>
<organism>
    <name type="scientific">Bacillus cereus (strain ATCC 10987 / NRS 248)</name>
    <dbReference type="NCBI Taxonomy" id="222523"/>
    <lineage>
        <taxon>Bacteria</taxon>
        <taxon>Bacillati</taxon>
        <taxon>Bacillota</taxon>
        <taxon>Bacilli</taxon>
        <taxon>Bacillales</taxon>
        <taxon>Bacillaceae</taxon>
        <taxon>Bacillus</taxon>
        <taxon>Bacillus cereus group</taxon>
    </lineage>
</organism>
<feature type="chain" id="PRO_0000168318" description="L-lactate dehydrogenase 1">
    <location>
        <begin position="1"/>
        <end position="314"/>
    </location>
</feature>
<feature type="active site" description="Proton acceptor" evidence="1">
    <location>
        <position position="178"/>
    </location>
</feature>
<feature type="binding site" evidence="1">
    <location>
        <position position="16"/>
    </location>
    <ligand>
        <name>NAD(+)</name>
        <dbReference type="ChEBI" id="CHEBI:57540"/>
    </ligand>
</feature>
<feature type="binding site" evidence="1">
    <location>
        <position position="37"/>
    </location>
    <ligand>
        <name>NAD(+)</name>
        <dbReference type="ChEBI" id="CHEBI:57540"/>
    </ligand>
</feature>
<feature type="binding site" evidence="1">
    <location>
        <position position="42"/>
    </location>
    <ligand>
        <name>NAD(+)</name>
        <dbReference type="ChEBI" id="CHEBI:57540"/>
    </ligand>
</feature>
<feature type="binding site" evidence="1">
    <location>
        <position position="68"/>
    </location>
    <ligand>
        <name>NAD(+)</name>
        <dbReference type="ChEBI" id="CHEBI:57540"/>
    </ligand>
</feature>
<feature type="binding site" evidence="1">
    <location>
        <begin position="82"/>
        <end position="83"/>
    </location>
    <ligand>
        <name>NAD(+)</name>
        <dbReference type="ChEBI" id="CHEBI:57540"/>
    </ligand>
</feature>
<feature type="binding site" evidence="1">
    <location>
        <position position="85"/>
    </location>
    <ligand>
        <name>substrate</name>
    </ligand>
</feature>
<feature type="binding site" evidence="1">
    <location>
        <position position="91"/>
    </location>
    <ligand>
        <name>substrate</name>
    </ligand>
</feature>
<feature type="binding site" evidence="1">
    <location>
        <begin position="121"/>
        <end position="123"/>
    </location>
    <ligand>
        <name>NAD(+)</name>
        <dbReference type="ChEBI" id="CHEBI:57540"/>
    </ligand>
</feature>
<feature type="binding site" evidence="1">
    <location>
        <begin position="123"/>
        <end position="126"/>
    </location>
    <ligand>
        <name>substrate</name>
    </ligand>
</feature>
<feature type="binding site" evidence="1">
    <location>
        <position position="146"/>
    </location>
    <ligand>
        <name>NAD(+)</name>
        <dbReference type="ChEBI" id="CHEBI:57540"/>
    </ligand>
</feature>
<feature type="binding site" evidence="1">
    <location>
        <begin position="151"/>
        <end position="154"/>
    </location>
    <ligand>
        <name>substrate</name>
    </ligand>
</feature>
<feature type="binding site" evidence="1">
    <location>
        <position position="156"/>
    </location>
    <ligand>
        <name>beta-D-fructose 1,6-bisphosphate</name>
        <dbReference type="ChEBI" id="CHEBI:32966"/>
        <note>allosteric activator</note>
    </ligand>
</feature>
<feature type="binding site" evidence="1">
    <location>
        <position position="171"/>
    </location>
    <ligand>
        <name>beta-D-fructose 1,6-bisphosphate</name>
        <dbReference type="ChEBI" id="CHEBI:32966"/>
        <note>allosteric activator</note>
    </ligand>
</feature>
<feature type="binding site" evidence="1">
    <location>
        <position position="232"/>
    </location>
    <ligand>
        <name>substrate</name>
    </ligand>
</feature>
<feature type="modified residue" description="Phosphotyrosine" evidence="1">
    <location>
        <position position="223"/>
    </location>
</feature>
<protein>
    <recommendedName>
        <fullName evidence="1">L-lactate dehydrogenase 1</fullName>
        <shortName evidence="1">L-LDH 1</shortName>
        <ecNumber evidence="1">1.1.1.27</ecNumber>
    </recommendedName>
</protein>